<feature type="chain" id="PRO_0000409144" description="UDP-glycosyltransferase 92A1">
    <location>
        <begin position="1"/>
        <end position="488"/>
    </location>
</feature>
<feature type="binding site" evidence="1">
    <location>
        <position position="292"/>
    </location>
    <ligand>
        <name>UDP-alpha-D-glucose</name>
        <dbReference type="ChEBI" id="CHEBI:58885"/>
    </ligand>
</feature>
<feature type="binding site" evidence="1">
    <location>
        <begin position="358"/>
        <end position="360"/>
    </location>
    <ligand>
        <name>UDP-alpha-D-glucose</name>
        <dbReference type="ChEBI" id="CHEBI:58885"/>
    </ligand>
</feature>
<feature type="binding site" evidence="1">
    <location>
        <begin position="375"/>
        <end position="383"/>
    </location>
    <ligand>
        <name>UDP-alpha-D-glucose</name>
        <dbReference type="ChEBI" id="CHEBI:58885"/>
    </ligand>
</feature>
<feature type="binding site" evidence="1">
    <location>
        <begin position="397"/>
        <end position="400"/>
    </location>
    <ligand>
        <name>UDP-alpha-D-glucose</name>
        <dbReference type="ChEBI" id="CHEBI:58885"/>
    </ligand>
</feature>
<feature type="sequence conflict" description="In Ref. 3; AAL57638." evidence="2" ref="3">
    <original>VM</original>
    <variation>GV</variation>
    <location>
        <begin position="437"/>
        <end position="438"/>
    </location>
</feature>
<keyword id="KW-0328">Glycosyltransferase</keyword>
<keyword id="KW-1185">Reference proteome</keyword>
<keyword id="KW-0808">Transferase</keyword>
<reference key="1">
    <citation type="journal article" date="2000" name="Nature">
        <title>Sequence and analysis of chromosome 5 of the plant Arabidopsis thaliana.</title>
        <authorList>
            <person name="Tabata S."/>
            <person name="Kaneko T."/>
            <person name="Nakamura Y."/>
            <person name="Kotani H."/>
            <person name="Kato T."/>
            <person name="Asamizu E."/>
            <person name="Miyajima N."/>
            <person name="Sasamoto S."/>
            <person name="Kimura T."/>
            <person name="Hosouchi T."/>
            <person name="Kawashima K."/>
            <person name="Kohara M."/>
            <person name="Matsumoto M."/>
            <person name="Matsuno A."/>
            <person name="Muraki A."/>
            <person name="Nakayama S."/>
            <person name="Nakazaki N."/>
            <person name="Naruo K."/>
            <person name="Okumura S."/>
            <person name="Shinpo S."/>
            <person name="Takeuchi C."/>
            <person name="Wada T."/>
            <person name="Watanabe A."/>
            <person name="Yamada M."/>
            <person name="Yasuda M."/>
            <person name="Sato S."/>
            <person name="de la Bastide M."/>
            <person name="Huang E."/>
            <person name="Spiegel L."/>
            <person name="Gnoj L."/>
            <person name="O'Shaughnessy A."/>
            <person name="Preston R."/>
            <person name="Habermann K."/>
            <person name="Murray J."/>
            <person name="Johnson D."/>
            <person name="Rohlfing T."/>
            <person name="Nelson J."/>
            <person name="Stoneking T."/>
            <person name="Pepin K."/>
            <person name="Spieth J."/>
            <person name="Sekhon M."/>
            <person name="Armstrong J."/>
            <person name="Becker M."/>
            <person name="Belter E."/>
            <person name="Cordum H."/>
            <person name="Cordes M."/>
            <person name="Courtney L."/>
            <person name="Courtney W."/>
            <person name="Dante M."/>
            <person name="Du H."/>
            <person name="Edwards J."/>
            <person name="Fryman J."/>
            <person name="Haakensen B."/>
            <person name="Lamar E."/>
            <person name="Latreille P."/>
            <person name="Leonard S."/>
            <person name="Meyer R."/>
            <person name="Mulvaney E."/>
            <person name="Ozersky P."/>
            <person name="Riley A."/>
            <person name="Strowmatt C."/>
            <person name="Wagner-McPherson C."/>
            <person name="Wollam A."/>
            <person name="Yoakum M."/>
            <person name="Bell M."/>
            <person name="Dedhia N."/>
            <person name="Parnell L."/>
            <person name="Shah R."/>
            <person name="Rodriguez M."/>
            <person name="Hoon See L."/>
            <person name="Vil D."/>
            <person name="Baker J."/>
            <person name="Kirchoff K."/>
            <person name="Toth K."/>
            <person name="King L."/>
            <person name="Bahret A."/>
            <person name="Miller B."/>
            <person name="Marra M.A."/>
            <person name="Martienssen R."/>
            <person name="McCombie W.R."/>
            <person name="Wilson R.K."/>
            <person name="Murphy G."/>
            <person name="Bancroft I."/>
            <person name="Volckaert G."/>
            <person name="Wambutt R."/>
            <person name="Duesterhoeft A."/>
            <person name="Stiekema W."/>
            <person name="Pohl T."/>
            <person name="Entian K.-D."/>
            <person name="Terryn N."/>
            <person name="Hartley N."/>
            <person name="Bent E."/>
            <person name="Johnson S."/>
            <person name="Langham S.-A."/>
            <person name="McCullagh B."/>
            <person name="Robben J."/>
            <person name="Grymonprez B."/>
            <person name="Zimmermann W."/>
            <person name="Ramsperger U."/>
            <person name="Wedler H."/>
            <person name="Balke K."/>
            <person name="Wedler E."/>
            <person name="Peters S."/>
            <person name="van Staveren M."/>
            <person name="Dirkse W."/>
            <person name="Mooijman P."/>
            <person name="Klein Lankhorst R."/>
            <person name="Weitzenegger T."/>
            <person name="Bothe G."/>
            <person name="Rose M."/>
            <person name="Hauf J."/>
            <person name="Berneiser S."/>
            <person name="Hempel S."/>
            <person name="Feldpausch M."/>
            <person name="Lamberth S."/>
            <person name="Villarroel R."/>
            <person name="Gielen J."/>
            <person name="Ardiles W."/>
            <person name="Bents O."/>
            <person name="Lemcke K."/>
            <person name="Kolesov G."/>
            <person name="Mayer K.F.X."/>
            <person name="Rudd S."/>
            <person name="Schoof H."/>
            <person name="Schueller C."/>
            <person name="Zaccaria P."/>
            <person name="Mewes H.-W."/>
            <person name="Bevan M."/>
            <person name="Fransz P.F."/>
        </authorList>
    </citation>
    <scope>NUCLEOTIDE SEQUENCE [LARGE SCALE GENOMIC DNA]</scope>
    <source>
        <strain>cv. Columbia</strain>
    </source>
</reference>
<reference key="2">
    <citation type="journal article" date="2017" name="Plant J.">
        <title>Araport11: a complete reannotation of the Arabidopsis thaliana reference genome.</title>
        <authorList>
            <person name="Cheng C.Y."/>
            <person name="Krishnakumar V."/>
            <person name="Chan A.P."/>
            <person name="Thibaud-Nissen F."/>
            <person name="Schobel S."/>
            <person name="Town C.D."/>
        </authorList>
    </citation>
    <scope>GENOME REANNOTATION</scope>
    <source>
        <strain>cv. Columbia</strain>
    </source>
</reference>
<reference key="3">
    <citation type="journal article" date="2003" name="Science">
        <title>Empirical analysis of transcriptional activity in the Arabidopsis genome.</title>
        <authorList>
            <person name="Yamada K."/>
            <person name="Lim J."/>
            <person name="Dale J.M."/>
            <person name="Chen H."/>
            <person name="Shinn P."/>
            <person name="Palm C.J."/>
            <person name="Southwick A.M."/>
            <person name="Wu H.C."/>
            <person name="Kim C.J."/>
            <person name="Nguyen M."/>
            <person name="Pham P.K."/>
            <person name="Cheuk R.F."/>
            <person name="Karlin-Newmann G."/>
            <person name="Liu S.X."/>
            <person name="Lam B."/>
            <person name="Sakano H."/>
            <person name="Wu T."/>
            <person name="Yu G."/>
            <person name="Miranda M."/>
            <person name="Quach H.L."/>
            <person name="Tripp M."/>
            <person name="Chang C.H."/>
            <person name="Lee J.M."/>
            <person name="Toriumi M.J."/>
            <person name="Chan M.M."/>
            <person name="Tang C.C."/>
            <person name="Onodera C.S."/>
            <person name="Deng J.M."/>
            <person name="Akiyama K."/>
            <person name="Ansari Y."/>
            <person name="Arakawa T."/>
            <person name="Banh J."/>
            <person name="Banno F."/>
            <person name="Bowser L."/>
            <person name="Brooks S.Y."/>
            <person name="Carninci P."/>
            <person name="Chao Q."/>
            <person name="Choy N."/>
            <person name="Enju A."/>
            <person name="Goldsmith A.D."/>
            <person name="Gurjal M."/>
            <person name="Hansen N.F."/>
            <person name="Hayashizaki Y."/>
            <person name="Johnson-Hopson C."/>
            <person name="Hsuan V.W."/>
            <person name="Iida K."/>
            <person name="Karnes M."/>
            <person name="Khan S."/>
            <person name="Koesema E."/>
            <person name="Ishida J."/>
            <person name="Jiang P.X."/>
            <person name="Jones T."/>
            <person name="Kawai J."/>
            <person name="Kamiya A."/>
            <person name="Meyers C."/>
            <person name="Nakajima M."/>
            <person name="Narusaka M."/>
            <person name="Seki M."/>
            <person name="Sakurai T."/>
            <person name="Satou M."/>
            <person name="Tamse R."/>
            <person name="Vaysberg M."/>
            <person name="Wallender E.K."/>
            <person name="Wong C."/>
            <person name="Yamamura Y."/>
            <person name="Yuan S."/>
            <person name="Shinozaki K."/>
            <person name="Davis R.W."/>
            <person name="Theologis A."/>
            <person name="Ecker J.R."/>
        </authorList>
    </citation>
    <scope>NUCLEOTIDE SEQUENCE [LARGE SCALE MRNA]</scope>
    <source>
        <strain>cv. Columbia</strain>
    </source>
</reference>
<reference key="4">
    <citation type="journal article" date="2001" name="J. Biol. Chem.">
        <title>Phylogenetic analysis of the UDP-glycosyltransferase multigene family of Arabidopsis thaliana.</title>
        <authorList>
            <person name="Li Y."/>
            <person name="Baldauf S."/>
            <person name="Lim E.K."/>
            <person name="Bowles D.J."/>
        </authorList>
    </citation>
    <scope>GENE FAMILY</scope>
</reference>
<comment type="similarity">
    <text evidence="2">Belongs to the UDP-glycosyltransferase family.</text>
</comment>
<gene>
    <name type="primary">UGT92A1</name>
    <name type="ordered locus">At5g12890</name>
    <name type="ORF">T24H18.60</name>
</gene>
<protein>
    <recommendedName>
        <fullName>UDP-glycosyltransferase 92A1</fullName>
        <ecNumber>2.4.1.-</ecNumber>
    </recommendedName>
</protein>
<accession>Q9LXV0</accession>
<accession>Q8VZF9</accession>
<sequence>MAEAKPRNLRIVMFPFMGQGHIIPFVALALRLEKIMIMNRANKTTISMINTPSNIPKIRSNLPPESSISLIELPFNSSDHGLPHDGENFDSLPYSLVISLLEASRSLREPFRDFMTKILKEEGQSSVIVIGDFFLGWIGKVCKEVGVYSVIFSASGAFGLGCYRSIWLNLPHKETKQDQFLLDDFPEAGEIEKTQLNSFMLEADGTDDWSVFMKKIIPGWSDFDGFLFNTVAEIDQMGLSYFRRITGVPVWPVGPVLKSPDKKVGSRSTEEAVKSWLDSKPDHSVVYVCFGSMNSILQTHMLELAMALESSEKNFIWVVRPPIGVEVKSEFDVKGYLPEGFEERITRSERGLLVKKWAPQVDILSHKATCVFLSHCGWNSILESLSHGVPLLGWPMAAEQFFNSILMEKHIGVSVEVARGKRCEIKCDDIVSKIKLVMEETEVGKEIRKKAREVKELVRRAMVDGVKGSSVIGLEEFLDQAMVKKVEN</sequence>
<evidence type="ECO:0000250" key="1"/>
<evidence type="ECO:0000305" key="2"/>
<dbReference type="EC" id="2.4.1.-"/>
<dbReference type="EMBL" id="AL353013">
    <property type="protein sequence ID" value="CAB88253.1"/>
    <property type="molecule type" value="Genomic_DNA"/>
</dbReference>
<dbReference type="EMBL" id="CP002688">
    <property type="protein sequence ID" value="AED91826.1"/>
    <property type="molecule type" value="Genomic_DNA"/>
</dbReference>
<dbReference type="EMBL" id="AY064985">
    <property type="protein sequence ID" value="AAL57638.1"/>
    <property type="molecule type" value="mRNA"/>
</dbReference>
<dbReference type="PIR" id="T49903">
    <property type="entry name" value="T49903"/>
</dbReference>
<dbReference type="RefSeq" id="NP_196793.1">
    <property type="nucleotide sequence ID" value="NM_121292.5"/>
</dbReference>
<dbReference type="SMR" id="Q9LXV0"/>
<dbReference type="FunCoup" id="Q9LXV0">
    <property type="interactions" value="312"/>
</dbReference>
<dbReference type="IntAct" id="Q9LXV0">
    <property type="interactions" value="1"/>
</dbReference>
<dbReference type="STRING" id="3702.Q9LXV0"/>
<dbReference type="CAZy" id="GT1">
    <property type="family name" value="Glycosyltransferase Family 1"/>
</dbReference>
<dbReference type="iPTMnet" id="Q9LXV0"/>
<dbReference type="PaxDb" id="3702-AT5G12890.1"/>
<dbReference type="ProteomicsDB" id="228731"/>
<dbReference type="EnsemblPlants" id="AT5G12890.1">
    <property type="protein sequence ID" value="AT5G12890.1"/>
    <property type="gene ID" value="AT5G12890"/>
</dbReference>
<dbReference type="GeneID" id="831129"/>
<dbReference type="Gramene" id="AT5G12890.1">
    <property type="protein sequence ID" value="AT5G12890.1"/>
    <property type="gene ID" value="AT5G12890"/>
</dbReference>
<dbReference type="KEGG" id="ath:AT5G12890"/>
<dbReference type="Araport" id="AT5G12890"/>
<dbReference type="TAIR" id="AT5G12890"/>
<dbReference type="eggNOG" id="KOG1192">
    <property type="taxonomic scope" value="Eukaryota"/>
</dbReference>
<dbReference type="HOGENOM" id="CLU_001724_2_2_1"/>
<dbReference type="InParanoid" id="Q9LXV0"/>
<dbReference type="OMA" id="QFFNVKF"/>
<dbReference type="OrthoDB" id="5835829at2759"/>
<dbReference type="PhylomeDB" id="Q9LXV0"/>
<dbReference type="BioCyc" id="ARA:AT5G12890-MONOMER"/>
<dbReference type="PRO" id="PR:Q9LXV0"/>
<dbReference type="Proteomes" id="UP000006548">
    <property type="component" value="Chromosome 5"/>
</dbReference>
<dbReference type="ExpressionAtlas" id="Q9LXV0">
    <property type="expression patterns" value="baseline and differential"/>
</dbReference>
<dbReference type="GO" id="GO:0046527">
    <property type="term" value="F:glucosyltransferase activity"/>
    <property type="evidence" value="ECO:0007669"/>
    <property type="project" value="UniProtKB-ARBA"/>
</dbReference>
<dbReference type="GO" id="GO:0008194">
    <property type="term" value="F:UDP-glycosyltransferase activity"/>
    <property type="evidence" value="ECO:0007669"/>
    <property type="project" value="InterPro"/>
</dbReference>
<dbReference type="CDD" id="cd03784">
    <property type="entry name" value="GT1_Gtf-like"/>
    <property type="match status" value="1"/>
</dbReference>
<dbReference type="FunFam" id="3.40.50.2000:FF:000064">
    <property type="entry name" value="Glycosyltransferase"/>
    <property type="match status" value="1"/>
</dbReference>
<dbReference type="FunFam" id="3.40.50.2000:FF:000103">
    <property type="entry name" value="Glycosyltransferase"/>
    <property type="match status" value="1"/>
</dbReference>
<dbReference type="Gene3D" id="3.40.50.2000">
    <property type="entry name" value="Glycogen Phosphorylase B"/>
    <property type="match status" value="2"/>
</dbReference>
<dbReference type="InterPro" id="IPR002213">
    <property type="entry name" value="UDP_glucos_trans"/>
</dbReference>
<dbReference type="InterPro" id="IPR035595">
    <property type="entry name" value="UDP_glycos_trans_CS"/>
</dbReference>
<dbReference type="PANTHER" id="PTHR48047">
    <property type="entry name" value="GLYCOSYLTRANSFERASE"/>
    <property type="match status" value="1"/>
</dbReference>
<dbReference type="PANTHER" id="PTHR48047:SF61">
    <property type="entry name" value="OS04G0273600 PROTEIN"/>
    <property type="match status" value="1"/>
</dbReference>
<dbReference type="Pfam" id="PF00201">
    <property type="entry name" value="UDPGT"/>
    <property type="match status" value="1"/>
</dbReference>
<dbReference type="SUPFAM" id="SSF53756">
    <property type="entry name" value="UDP-Glycosyltransferase/glycogen phosphorylase"/>
    <property type="match status" value="1"/>
</dbReference>
<dbReference type="PROSITE" id="PS00375">
    <property type="entry name" value="UDPGT"/>
    <property type="match status" value="1"/>
</dbReference>
<proteinExistence type="evidence at transcript level"/>
<name>U92A1_ARATH</name>
<organism>
    <name type="scientific">Arabidopsis thaliana</name>
    <name type="common">Mouse-ear cress</name>
    <dbReference type="NCBI Taxonomy" id="3702"/>
    <lineage>
        <taxon>Eukaryota</taxon>
        <taxon>Viridiplantae</taxon>
        <taxon>Streptophyta</taxon>
        <taxon>Embryophyta</taxon>
        <taxon>Tracheophyta</taxon>
        <taxon>Spermatophyta</taxon>
        <taxon>Magnoliopsida</taxon>
        <taxon>eudicotyledons</taxon>
        <taxon>Gunneridae</taxon>
        <taxon>Pentapetalae</taxon>
        <taxon>rosids</taxon>
        <taxon>malvids</taxon>
        <taxon>Brassicales</taxon>
        <taxon>Brassicaceae</taxon>
        <taxon>Camelineae</taxon>
        <taxon>Arabidopsis</taxon>
    </lineage>
</organism>